<name>RS10_NOCSJ</name>
<sequence length="102" mass="11619">MAGQKIRIRLKAYDHEVIDTSARKIVDTVTRTGAKVAGPVPLPTEKNVYCVIRSPHKYKDSREHFEMRTHKRLIDIIDPTPKTVDSLMRLDLPAGVDIEIKL</sequence>
<protein>
    <recommendedName>
        <fullName evidence="1">Small ribosomal subunit protein uS10</fullName>
    </recommendedName>
    <alternativeName>
        <fullName evidence="2">30S ribosomal protein S10</fullName>
    </alternativeName>
</protein>
<gene>
    <name evidence="1" type="primary">rpsJ</name>
    <name type="ordered locus">Noca_3906</name>
</gene>
<accession>A1SNL9</accession>
<evidence type="ECO:0000255" key="1">
    <source>
        <dbReference type="HAMAP-Rule" id="MF_00508"/>
    </source>
</evidence>
<evidence type="ECO:0000305" key="2"/>
<dbReference type="EMBL" id="CP000509">
    <property type="protein sequence ID" value="ABL83404.1"/>
    <property type="molecule type" value="Genomic_DNA"/>
</dbReference>
<dbReference type="RefSeq" id="WP_008360994.1">
    <property type="nucleotide sequence ID" value="NC_008699.1"/>
</dbReference>
<dbReference type="SMR" id="A1SNL9"/>
<dbReference type="STRING" id="196162.Noca_3906"/>
<dbReference type="KEGG" id="nca:Noca_3906"/>
<dbReference type="eggNOG" id="COG0051">
    <property type="taxonomic scope" value="Bacteria"/>
</dbReference>
<dbReference type="HOGENOM" id="CLU_122625_1_3_11"/>
<dbReference type="OrthoDB" id="9804464at2"/>
<dbReference type="Proteomes" id="UP000000640">
    <property type="component" value="Chromosome"/>
</dbReference>
<dbReference type="GO" id="GO:1990904">
    <property type="term" value="C:ribonucleoprotein complex"/>
    <property type="evidence" value="ECO:0007669"/>
    <property type="project" value="UniProtKB-KW"/>
</dbReference>
<dbReference type="GO" id="GO:0005840">
    <property type="term" value="C:ribosome"/>
    <property type="evidence" value="ECO:0007669"/>
    <property type="project" value="UniProtKB-KW"/>
</dbReference>
<dbReference type="GO" id="GO:0003735">
    <property type="term" value="F:structural constituent of ribosome"/>
    <property type="evidence" value="ECO:0007669"/>
    <property type="project" value="InterPro"/>
</dbReference>
<dbReference type="GO" id="GO:0000049">
    <property type="term" value="F:tRNA binding"/>
    <property type="evidence" value="ECO:0007669"/>
    <property type="project" value="UniProtKB-UniRule"/>
</dbReference>
<dbReference type="GO" id="GO:0006412">
    <property type="term" value="P:translation"/>
    <property type="evidence" value="ECO:0007669"/>
    <property type="project" value="UniProtKB-UniRule"/>
</dbReference>
<dbReference type="FunFam" id="3.30.70.600:FF:000001">
    <property type="entry name" value="30S ribosomal protein S10"/>
    <property type="match status" value="1"/>
</dbReference>
<dbReference type="Gene3D" id="3.30.70.600">
    <property type="entry name" value="Ribosomal protein S10 domain"/>
    <property type="match status" value="1"/>
</dbReference>
<dbReference type="HAMAP" id="MF_00508">
    <property type="entry name" value="Ribosomal_uS10"/>
    <property type="match status" value="1"/>
</dbReference>
<dbReference type="InterPro" id="IPR001848">
    <property type="entry name" value="Ribosomal_uS10"/>
</dbReference>
<dbReference type="InterPro" id="IPR018268">
    <property type="entry name" value="Ribosomal_uS10_CS"/>
</dbReference>
<dbReference type="InterPro" id="IPR027486">
    <property type="entry name" value="Ribosomal_uS10_dom"/>
</dbReference>
<dbReference type="InterPro" id="IPR036838">
    <property type="entry name" value="Ribosomal_uS10_dom_sf"/>
</dbReference>
<dbReference type="NCBIfam" id="NF001861">
    <property type="entry name" value="PRK00596.1"/>
    <property type="match status" value="1"/>
</dbReference>
<dbReference type="NCBIfam" id="TIGR01049">
    <property type="entry name" value="rpsJ_bact"/>
    <property type="match status" value="1"/>
</dbReference>
<dbReference type="PANTHER" id="PTHR11700">
    <property type="entry name" value="30S RIBOSOMAL PROTEIN S10 FAMILY MEMBER"/>
    <property type="match status" value="1"/>
</dbReference>
<dbReference type="Pfam" id="PF00338">
    <property type="entry name" value="Ribosomal_S10"/>
    <property type="match status" value="1"/>
</dbReference>
<dbReference type="PRINTS" id="PR00971">
    <property type="entry name" value="RIBOSOMALS10"/>
</dbReference>
<dbReference type="SMART" id="SM01403">
    <property type="entry name" value="Ribosomal_S10"/>
    <property type="match status" value="1"/>
</dbReference>
<dbReference type="SUPFAM" id="SSF54999">
    <property type="entry name" value="Ribosomal protein S10"/>
    <property type="match status" value="1"/>
</dbReference>
<dbReference type="PROSITE" id="PS00361">
    <property type="entry name" value="RIBOSOMAL_S10"/>
    <property type="match status" value="1"/>
</dbReference>
<reference key="1">
    <citation type="submission" date="2006-12" db="EMBL/GenBank/DDBJ databases">
        <title>Complete sequence of chromosome 1 of Nocardioides sp. JS614.</title>
        <authorList>
            <person name="Copeland A."/>
            <person name="Lucas S."/>
            <person name="Lapidus A."/>
            <person name="Barry K."/>
            <person name="Detter J.C."/>
            <person name="Glavina del Rio T."/>
            <person name="Hammon N."/>
            <person name="Israni S."/>
            <person name="Dalin E."/>
            <person name="Tice H."/>
            <person name="Pitluck S."/>
            <person name="Thompson L.S."/>
            <person name="Brettin T."/>
            <person name="Bruce D."/>
            <person name="Han C."/>
            <person name="Tapia R."/>
            <person name="Schmutz J."/>
            <person name="Larimer F."/>
            <person name="Land M."/>
            <person name="Hauser L."/>
            <person name="Kyrpides N."/>
            <person name="Kim E."/>
            <person name="Mattes T."/>
            <person name="Gossett J."/>
            <person name="Richardson P."/>
        </authorList>
    </citation>
    <scope>NUCLEOTIDE SEQUENCE [LARGE SCALE GENOMIC DNA]</scope>
    <source>
        <strain>ATCC BAA-499 / JS614</strain>
    </source>
</reference>
<keyword id="KW-1185">Reference proteome</keyword>
<keyword id="KW-0687">Ribonucleoprotein</keyword>
<keyword id="KW-0689">Ribosomal protein</keyword>
<feature type="chain" id="PRO_1000015070" description="Small ribosomal subunit protein uS10">
    <location>
        <begin position="1"/>
        <end position="102"/>
    </location>
</feature>
<proteinExistence type="inferred from homology"/>
<organism>
    <name type="scientific">Nocardioides sp. (strain ATCC BAA-499 / JS614)</name>
    <dbReference type="NCBI Taxonomy" id="196162"/>
    <lineage>
        <taxon>Bacteria</taxon>
        <taxon>Bacillati</taxon>
        <taxon>Actinomycetota</taxon>
        <taxon>Actinomycetes</taxon>
        <taxon>Propionibacteriales</taxon>
        <taxon>Nocardioidaceae</taxon>
        <taxon>Nocardioides</taxon>
    </lineage>
</organism>
<comment type="function">
    <text evidence="1">Involved in the binding of tRNA to the ribosomes.</text>
</comment>
<comment type="subunit">
    <text evidence="1">Part of the 30S ribosomal subunit.</text>
</comment>
<comment type="similarity">
    <text evidence="1">Belongs to the universal ribosomal protein uS10 family.</text>
</comment>